<keyword id="KW-0002">3D-structure</keyword>
<keyword id="KW-0150">Chloroplast</keyword>
<keyword id="KW-0472">Membrane</keyword>
<keyword id="KW-0602">Photosynthesis</keyword>
<keyword id="KW-0604">Photosystem II</keyword>
<keyword id="KW-0934">Plastid</keyword>
<keyword id="KW-0793">Thylakoid</keyword>
<keyword id="KW-0812">Transmembrane</keyword>
<keyword id="KW-1133">Transmembrane helix</keyword>
<feature type="chain" id="PRO_0000277151" description="Photosystem II reaction center protein Y">
    <location>
        <begin position="1"/>
        <end position="36"/>
    </location>
</feature>
<feature type="topological domain" description="Lumenal" evidence="1">
    <location>
        <begin position="1"/>
        <end position="4"/>
    </location>
</feature>
<feature type="transmembrane region" description="Helical" evidence="1">
    <location>
        <begin position="5"/>
        <end position="23"/>
    </location>
</feature>
<feature type="topological domain" description="Stromal" evidence="1">
    <location>
        <begin position="24"/>
        <end position="36"/>
    </location>
</feature>
<gene>
    <name evidence="1" type="primary">psbY-A</name>
</gene>
<gene>
    <name evidence="1" type="primary">psbY-B</name>
</gene>
<protein>
    <recommendedName>
        <fullName evidence="1">Photosystem II reaction center protein Y</fullName>
    </recommendedName>
</protein>
<name>PSBY_THAPS</name>
<sequence>MDTRLLVIAAPVLVAASWALFNIGRLAIQQIQRLSR</sequence>
<accession>A0T0V3</accession>
<proteinExistence type="evidence at protein level"/>
<comment type="function">
    <text evidence="1">Loosely associated component of the core of photosystem II (PSII), it is not always seen in crystals. PSII is a light-driven water plastoquinone oxidoreductase, using light energy to abstract electrons from H(2)O, generating a proton gradient subsequently used for ATP formation.</text>
</comment>
<comment type="subunit">
    <text evidence="1">PSII is composed of 1 copy each of membrane proteins PsbA, PsbB, PsbC, PsbD, PsbE, PsbF, PsbH, PsbI, PsbJ, PsbK, PsbL, PsbM, PsbT, PsbX, PsbY, PsbZ, Psb30/Ycf12, at least 3 peripheral proteins of the oxygen-evolving complex and a large number of cofactors. It forms dimeric complexes.</text>
</comment>
<comment type="subcellular location">
    <subcellularLocation>
        <location evidence="1">Plastid</location>
        <location evidence="1">Chloroplast thylakoid membrane</location>
        <topology evidence="1">Single-pass membrane protein</topology>
    </subcellularLocation>
</comment>
<comment type="similarity">
    <text evidence="1">Belongs to the PsbY family.</text>
</comment>
<organism>
    <name type="scientific">Thalassiosira pseudonana</name>
    <name type="common">Marine diatom</name>
    <name type="synonym">Cyclotella nana</name>
    <dbReference type="NCBI Taxonomy" id="35128"/>
    <lineage>
        <taxon>Eukaryota</taxon>
        <taxon>Sar</taxon>
        <taxon>Stramenopiles</taxon>
        <taxon>Ochrophyta</taxon>
        <taxon>Bacillariophyta</taxon>
        <taxon>Coscinodiscophyceae</taxon>
        <taxon>Thalassiosirophycidae</taxon>
        <taxon>Thalassiosirales</taxon>
        <taxon>Thalassiosiraceae</taxon>
        <taxon>Thalassiosira</taxon>
    </lineage>
</organism>
<reference key="1">
    <citation type="journal article" date="2007" name="Mol. Genet. Genomics">
        <title>Chloroplast genomes of the diatoms Phaeodactylum tricornutum and Thalassiosira pseudonana: comparison with other plastid genomes of the red lineage.</title>
        <authorList>
            <person name="Oudot-Le Secq M.-P."/>
            <person name="Grimwood J."/>
            <person name="Shapiro H."/>
            <person name="Armbrust E.V."/>
            <person name="Bowler C."/>
            <person name="Green B.R."/>
        </authorList>
    </citation>
    <scope>NUCLEOTIDE SEQUENCE [LARGE SCALE GENOMIC DNA]</scope>
    <source>
        <strain>CCMP1335 / NEPCC58 / CCAP 1085/12</strain>
    </source>
</reference>
<dbReference type="EMBL" id="EF067921">
    <property type="protein sequence ID" value="ABK20788.1"/>
    <property type="molecule type" value="Genomic_DNA"/>
</dbReference>
<dbReference type="EMBL" id="EF067921">
    <property type="protein sequence ID" value="ABK20852.1"/>
    <property type="molecule type" value="Genomic_DNA"/>
</dbReference>
<dbReference type="PDB" id="8J5K">
    <property type="method" value="EM"/>
    <property type="resolution" value="2.93 A"/>
    <property type="chains" value="Y/y=2-34"/>
</dbReference>
<dbReference type="PDBsum" id="8J5K"/>
<dbReference type="SMR" id="A0T0V3"/>
<dbReference type="STRING" id="35128.A0T0V3"/>
<dbReference type="InParanoid" id="A0T0V3"/>
<dbReference type="GO" id="GO:0009535">
    <property type="term" value="C:chloroplast thylakoid membrane"/>
    <property type="evidence" value="ECO:0007669"/>
    <property type="project" value="UniProtKB-SubCell"/>
</dbReference>
<dbReference type="GO" id="GO:0009523">
    <property type="term" value="C:photosystem II"/>
    <property type="evidence" value="ECO:0007669"/>
    <property type="project" value="UniProtKB-KW"/>
</dbReference>
<dbReference type="GO" id="GO:0030145">
    <property type="term" value="F:manganese ion binding"/>
    <property type="evidence" value="ECO:0007669"/>
    <property type="project" value="InterPro"/>
</dbReference>
<dbReference type="GO" id="GO:0015979">
    <property type="term" value="P:photosynthesis"/>
    <property type="evidence" value="ECO:0007669"/>
    <property type="project" value="UniProtKB-UniRule"/>
</dbReference>
<dbReference type="HAMAP" id="MF_00717">
    <property type="entry name" value="PSII_PsbY"/>
    <property type="match status" value="1"/>
</dbReference>
<dbReference type="InterPro" id="IPR009388">
    <property type="entry name" value="PSII_PsbY"/>
</dbReference>
<dbReference type="NCBIfam" id="NF009711">
    <property type="entry name" value="PRK13240.1"/>
    <property type="match status" value="1"/>
</dbReference>
<dbReference type="Pfam" id="PF06298">
    <property type="entry name" value="PsbY"/>
    <property type="match status" value="1"/>
</dbReference>
<geneLocation type="chloroplast"/>
<evidence type="ECO:0000255" key="1">
    <source>
        <dbReference type="HAMAP-Rule" id="MF_00717"/>
    </source>
</evidence>